<name>CASK_SHEEP</name>
<proteinExistence type="evidence at protein level"/>
<accession>P02669</accession>
<accession>Q69B24</accession>
<accession>Q6JZK3</accession>
<protein>
    <recommendedName>
        <fullName>Kappa-casein</fullName>
    </recommendedName>
</protein>
<gene>
    <name type="primary">CSN3</name>
    <name type="synonym">CSN10</name>
    <name type="synonym">CSNK</name>
</gene>
<organism>
    <name type="scientific">Ovis aries</name>
    <name type="common">Sheep</name>
    <dbReference type="NCBI Taxonomy" id="9940"/>
    <lineage>
        <taxon>Eukaryota</taxon>
        <taxon>Metazoa</taxon>
        <taxon>Chordata</taxon>
        <taxon>Craniata</taxon>
        <taxon>Vertebrata</taxon>
        <taxon>Euteleostomi</taxon>
        <taxon>Mammalia</taxon>
        <taxon>Eutheria</taxon>
        <taxon>Laurasiatheria</taxon>
        <taxon>Artiodactyla</taxon>
        <taxon>Ruminantia</taxon>
        <taxon>Pecora</taxon>
        <taxon>Bovidae</taxon>
        <taxon>Caprinae</taxon>
        <taxon>Ovis</taxon>
    </lineage>
</organism>
<keyword id="KW-0903">Direct protein sequencing</keyword>
<keyword id="KW-0325">Glycoprotein</keyword>
<keyword id="KW-0494">Milk protein</keyword>
<keyword id="KW-0597">Phosphoprotein</keyword>
<keyword id="KW-1185">Reference proteome</keyword>
<keyword id="KW-0964">Secreted</keyword>
<keyword id="KW-0732">Signal</keyword>
<dbReference type="EMBL" id="X51822">
    <property type="protein sequence ID" value="CAA36122.1"/>
    <property type="molecule type" value="mRNA"/>
</dbReference>
<dbReference type="EMBL" id="AY237637">
    <property type="protein sequence ID" value="AAP69943.1"/>
    <property type="molecule type" value="Genomic_DNA"/>
</dbReference>
<dbReference type="EMBL" id="AY444505">
    <property type="protein sequence ID" value="AAS17943.1"/>
    <property type="molecule type" value="Genomic_DNA"/>
</dbReference>
<dbReference type="EMBL" id="U84256">
    <property type="protein sequence ID" value="AAB47262.1"/>
    <property type="molecule type" value="Genomic_DNA"/>
</dbReference>
<dbReference type="PIR" id="S14711">
    <property type="entry name" value="KKSHA"/>
</dbReference>
<dbReference type="RefSeq" id="NP_001009378.1">
    <property type="nucleotide sequence ID" value="NM_001009378.1"/>
</dbReference>
<dbReference type="STRING" id="9940.ENSOARP00000011880"/>
<dbReference type="Allergome" id="1241">
    <property type="allergen name" value="Ovi a 8"/>
</dbReference>
<dbReference type="GlyCosmos" id="P02669">
    <property type="glycosylation" value="6 sites, No reported glycans"/>
</dbReference>
<dbReference type="PaxDb" id="9940-ENSOARP00000011880"/>
<dbReference type="Ensembl" id="ENSOART00185061278">
    <property type="protein sequence ID" value="ENSOARP00185031037"/>
    <property type="gene ID" value="ENSOARG00185036716"/>
</dbReference>
<dbReference type="Ensembl" id="ENSOART00215065993">
    <property type="protein sequence ID" value="ENSOARP00215035392"/>
    <property type="gene ID" value="ENSOARG00215039123"/>
</dbReference>
<dbReference type="Ensembl" id="ENSOART00220039321">
    <property type="protein sequence ID" value="ENSOARP00220021292"/>
    <property type="gene ID" value="ENSOARG00220023629"/>
</dbReference>
<dbReference type="Ensembl" id="ENSOART00225066772">
    <property type="protein sequence ID" value="ENSOARP00225033747"/>
    <property type="gene ID" value="ENSOARG00225040292"/>
</dbReference>
<dbReference type="Ensembl" id="ENSOART00260016871">
    <property type="protein sequence ID" value="ENSOARP00260008500"/>
    <property type="gene ID" value="ENSOARG00260010392"/>
</dbReference>
<dbReference type="GeneID" id="443394"/>
<dbReference type="KEGG" id="oas:443394"/>
<dbReference type="CTD" id="1448"/>
<dbReference type="eggNOG" id="ENOG502TM2T">
    <property type="taxonomic scope" value="Eukaryota"/>
</dbReference>
<dbReference type="HOGENOM" id="CLU_103388_0_0_1"/>
<dbReference type="OMA" id="YYVPNSY"/>
<dbReference type="OrthoDB" id="9836334at2759"/>
<dbReference type="Proteomes" id="UP000002356">
    <property type="component" value="Chromosome 6"/>
</dbReference>
<dbReference type="Bgee" id="ENSOARG00000011084">
    <property type="expression patterns" value="Expressed in mammary gland and 12 other cell types or tissues"/>
</dbReference>
<dbReference type="ExpressionAtlas" id="P02669">
    <property type="expression patterns" value="baseline"/>
</dbReference>
<dbReference type="GO" id="GO:0005615">
    <property type="term" value="C:extracellular space"/>
    <property type="evidence" value="ECO:0007669"/>
    <property type="project" value="Ensembl"/>
</dbReference>
<dbReference type="GO" id="GO:0007595">
    <property type="term" value="P:lactation"/>
    <property type="evidence" value="ECO:0007669"/>
    <property type="project" value="Ensembl"/>
</dbReference>
<dbReference type="GO" id="GO:0050821">
    <property type="term" value="P:protein stabilization"/>
    <property type="evidence" value="ECO:0007669"/>
    <property type="project" value="Ensembl"/>
</dbReference>
<dbReference type="InterPro" id="IPR000117">
    <property type="entry name" value="Casein_kappa"/>
</dbReference>
<dbReference type="PANTHER" id="PTHR11470">
    <property type="entry name" value="KAPPA CASEIN"/>
    <property type="match status" value="1"/>
</dbReference>
<dbReference type="PANTHER" id="PTHR11470:SF2">
    <property type="entry name" value="KAPPA-CASEIN"/>
    <property type="match status" value="1"/>
</dbReference>
<dbReference type="Pfam" id="PF00997">
    <property type="entry name" value="Casein_kappa"/>
    <property type="match status" value="1"/>
</dbReference>
<dbReference type="PIRSF" id="PIRSF002374">
    <property type="entry name" value="Casein_kappa"/>
    <property type="match status" value="1"/>
</dbReference>
<comment type="function">
    <text>Kappa-casein stabilizes micelle formation, preventing casein precipitation in milk.</text>
</comment>
<comment type="subcellular location">
    <subcellularLocation>
        <location>Secreted</location>
    </subcellularLocation>
</comment>
<comment type="tissue specificity">
    <text>Mammary gland specific. Secreted in milk.</text>
</comment>
<comment type="PTM">
    <text>O-glycosylated on Thr at position 156, 158 or 159.</text>
</comment>
<comment type="polymorphism">
    <text>The frequency of variant Leu-125 is 0.015 in the Italian breed Sopravissana.</text>
</comment>
<comment type="similarity">
    <text evidence="6">Belongs to the kappa-casein family.</text>
</comment>
<feature type="signal peptide" evidence="5">
    <location>
        <begin position="1"/>
        <end position="21"/>
    </location>
</feature>
<feature type="chain" id="PRO_0000004507" description="Kappa-casein">
    <location>
        <begin position="22"/>
        <end position="192"/>
    </location>
</feature>
<feature type="region of interest" description="Disordered" evidence="3">
    <location>
        <begin position="165"/>
        <end position="192"/>
    </location>
</feature>
<feature type="compositionally biased region" description="Low complexity" evidence="3">
    <location>
        <begin position="169"/>
        <end position="181"/>
    </location>
</feature>
<feature type="compositionally biased region" description="Polar residues" evidence="3">
    <location>
        <begin position="182"/>
        <end position="192"/>
    </location>
</feature>
<feature type="site" description="Cleavage; by chymosin/rennin">
    <location>
        <begin position="126"/>
        <end position="127"/>
    </location>
</feature>
<feature type="modified residue" description="Phosphoserine" evidence="1">
    <location>
        <position position="148"/>
    </location>
</feature>
<feature type="modified residue" description="Phosphoserine; alternate" evidence="1">
    <location>
        <position position="172"/>
    </location>
</feature>
<feature type="modified residue" description="Phosphoserine" evidence="2">
    <location>
        <position position="189"/>
    </location>
</feature>
<feature type="glycosylation site" description="O-linked (GalNAc...) threonine" evidence="1">
    <location>
        <position position="152"/>
    </location>
</feature>
<feature type="glycosylation site" description="O-linked (GalNAc...) serine" evidence="1">
    <location>
        <position position="155"/>
    </location>
</feature>
<feature type="glycosylation site" description="O-linked (GalNAc...) threonine" evidence="1">
    <location>
        <position position="156"/>
    </location>
</feature>
<feature type="glycosylation site" description="O-linked (GalNAc...) threonine" evidence="1">
    <location>
        <position position="159"/>
    </location>
</feature>
<feature type="glycosylation site" description="O-linked (GalNAc...) serine; alternate" evidence="1">
    <location>
        <position position="172"/>
    </location>
</feature>
<feature type="glycosylation site" description="O-linked (GalNAc...) threonine" evidence="1">
    <location>
        <position position="188"/>
    </location>
</feature>
<feature type="sequence variant" evidence="4">
    <original>S</original>
    <variation>L</variation>
    <location>
        <position position="125"/>
    </location>
</feature>
<feature type="sequence conflict" description="In Ref. 2; AA sequence." evidence="6" ref="2">
    <original>E</original>
    <variation>Q</variation>
    <location>
        <position position="23"/>
    </location>
</feature>
<feature type="sequence conflict" description="In Ref. 2; AA sequence." evidence="6" ref="2">
    <original>Q</original>
    <variation>E</variation>
    <location>
        <position position="28"/>
    </location>
</feature>
<sequence>MMKSFFLVVTILALTLPFLGAQEQNQEQRICCEKDERFFDDKIAKYIPIQYVLSRYPSYGLNYYQQRPVALINNQFLPYPYYAKPVAVRSPAQTLQWQVLPNAVPAKSCQDQPTAMARHPHPHLSFMAIPPKKDQDKTEIPAINTIASAEPTVHSTPTTEAVVNAVDNPEASSESIASAPETNTAQVTSTEV</sequence>
<reference key="1">
    <citation type="journal article" date="1990" name="Nucleic Acids Res.">
        <title>Nucleotide sequence of ovine kappa-casein cDNA.</title>
        <authorList>
            <person name="Furet J.-P."/>
            <person name="Mercier J.-C."/>
            <person name="Soulier S."/>
            <person name="Gaye P."/>
            <person name="Hue-Delahaie D."/>
            <person name="Vilotte J.-L."/>
        </authorList>
    </citation>
    <scope>NUCLEOTIDE SEQUENCE [MRNA]</scope>
</reference>
<reference key="2">
    <citation type="journal article" date="1974" name="Eur. J. Biochem.">
        <title>The sequence of sheep kappa-casein: primary structure of para-kappa A-casein.</title>
        <authorList>
            <person name="Jolles J."/>
            <person name="Schoentgen F."/>
            <person name="Hermann J."/>
            <person name="Alais C."/>
            <person name="Jolles P."/>
        </authorList>
    </citation>
    <scope>PROTEIN SEQUENCE OF 22-129 (VARIANT A)</scope>
</reference>
<reference key="3">
    <citation type="book" date="2003" name="The 54th Annual meeting of the European Association for Animal Production (EAAP), Rome, Italy, Sep. 2003">
        <title>A single nucleotide polymorphism in the sheep K-casein (CSN3) coding region.</title>
        <editorList>
            <person name="van der Honing Y."/>
        </editorList>
        <authorList>
            <person name="Feligini M."/>
            <person name="Curik V.C."/>
            <person name="Parma P."/>
            <person name="Greppi G.F."/>
            <person name="Enne G."/>
        </authorList>
    </citation>
    <scope>NUCLEOTIDE SEQUENCE [GENOMIC DNA] OF 31-192</scope>
</reference>
<reference key="4">
    <citation type="journal article" date="2004" name="J. Dairy Sci.">
        <title>Single nucleotide polymorphisms in the ovine casein genes detected by polymerase chain reaction-single strand conformation polymorphism.</title>
        <authorList>
            <person name="Ceriotti G."/>
            <person name="Chessa S."/>
            <person name="Bolla P."/>
            <person name="Budelli E."/>
            <person name="Bianchi L."/>
            <person name="Duranti E."/>
            <person name="Caroli A."/>
        </authorList>
    </citation>
    <scope>NUCLEOTIDE SEQUENCE [GENOMIC DNA] OF 71-187</scope>
    <scope>VARIANT LEU-125</scope>
    <source>
        <strain>Comisana</strain>
        <strain>Sarda</strain>
        <strain>Sopravissana</strain>
        <tissue>Blood</tissue>
    </source>
</reference>
<reference key="5">
    <citation type="journal article" date="1974" name="Biochim. Biophys. Acta">
        <title>The amino acid sequence of sheep kappa A-casein. II. Sequence studies concerning the kappa A-caseinoglycopeptide and establishment of the complete primary structure of the protein.</title>
        <authorList>
            <person name="Jolles J."/>
            <person name="Fiat A.-M."/>
            <person name="Schoentgen F."/>
            <person name="Alais C."/>
            <person name="Jolles P."/>
        </authorList>
    </citation>
    <scope>PROTEIN SEQUENCE OF 127-192 (VARIANT A)</scope>
</reference>
<reference key="6">
    <citation type="submission" date="1997-02" db="EMBL/GenBank/DDBJ databases">
        <authorList>
            <person name="Woollard J.R."/>
            <person name="Dentine M.R."/>
        </authorList>
    </citation>
    <scope>NUCLEOTIDE SEQUENCE [GENOMIC DNA] OF 133-192</scope>
</reference>
<evidence type="ECO:0000250" key="1">
    <source>
        <dbReference type="UniProtKB" id="P02668"/>
    </source>
</evidence>
<evidence type="ECO:0000250" key="2">
    <source>
        <dbReference type="UniProtKB" id="P02670"/>
    </source>
</evidence>
<evidence type="ECO:0000256" key="3">
    <source>
        <dbReference type="SAM" id="MobiDB-lite"/>
    </source>
</evidence>
<evidence type="ECO:0000269" key="4">
    <source>
    </source>
</evidence>
<evidence type="ECO:0000269" key="5">
    <source>
    </source>
</evidence>
<evidence type="ECO:0000305" key="6"/>